<dbReference type="EC" id="2.7.8.13" evidence="1"/>
<dbReference type="EMBL" id="CP001032">
    <property type="protein sequence ID" value="ACB75913.1"/>
    <property type="molecule type" value="Genomic_DNA"/>
</dbReference>
<dbReference type="RefSeq" id="WP_012375448.1">
    <property type="nucleotide sequence ID" value="NC_010571.1"/>
</dbReference>
<dbReference type="SMR" id="B1ZU32"/>
<dbReference type="STRING" id="452637.Oter_2632"/>
<dbReference type="KEGG" id="ote:Oter_2632"/>
<dbReference type="eggNOG" id="COG0472">
    <property type="taxonomic scope" value="Bacteria"/>
</dbReference>
<dbReference type="HOGENOM" id="CLU_023982_0_0_0"/>
<dbReference type="OrthoDB" id="9805475at2"/>
<dbReference type="UniPathway" id="UPA00219"/>
<dbReference type="Proteomes" id="UP000007013">
    <property type="component" value="Chromosome"/>
</dbReference>
<dbReference type="GO" id="GO:0005886">
    <property type="term" value="C:plasma membrane"/>
    <property type="evidence" value="ECO:0007669"/>
    <property type="project" value="UniProtKB-SubCell"/>
</dbReference>
<dbReference type="GO" id="GO:0046872">
    <property type="term" value="F:metal ion binding"/>
    <property type="evidence" value="ECO:0007669"/>
    <property type="project" value="UniProtKB-KW"/>
</dbReference>
<dbReference type="GO" id="GO:0008963">
    <property type="term" value="F:phospho-N-acetylmuramoyl-pentapeptide-transferase activity"/>
    <property type="evidence" value="ECO:0007669"/>
    <property type="project" value="UniProtKB-UniRule"/>
</dbReference>
<dbReference type="GO" id="GO:0051992">
    <property type="term" value="F:UDP-N-acetylmuramoyl-L-alanyl-D-glutamyl-meso-2,6-diaminopimelyl-D-alanyl-D-alanine:undecaprenyl-phosphate transferase activity"/>
    <property type="evidence" value="ECO:0007669"/>
    <property type="project" value="RHEA"/>
</dbReference>
<dbReference type="GO" id="GO:0051301">
    <property type="term" value="P:cell division"/>
    <property type="evidence" value="ECO:0007669"/>
    <property type="project" value="UniProtKB-KW"/>
</dbReference>
<dbReference type="GO" id="GO:0071555">
    <property type="term" value="P:cell wall organization"/>
    <property type="evidence" value="ECO:0007669"/>
    <property type="project" value="UniProtKB-KW"/>
</dbReference>
<dbReference type="GO" id="GO:0009252">
    <property type="term" value="P:peptidoglycan biosynthetic process"/>
    <property type="evidence" value="ECO:0007669"/>
    <property type="project" value="UniProtKB-UniRule"/>
</dbReference>
<dbReference type="GO" id="GO:0008360">
    <property type="term" value="P:regulation of cell shape"/>
    <property type="evidence" value="ECO:0007669"/>
    <property type="project" value="UniProtKB-KW"/>
</dbReference>
<dbReference type="CDD" id="cd06852">
    <property type="entry name" value="GT_MraY"/>
    <property type="match status" value="1"/>
</dbReference>
<dbReference type="HAMAP" id="MF_00038">
    <property type="entry name" value="MraY"/>
    <property type="match status" value="1"/>
</dbReference>
<dbReference type="InterPro" id="IPR000715">
    <property type="entry name" value="Glycosyl_transferase_4"/>
</dbReference>
<dbReference type="InterPro" id="IPR003524">
    <property type="entry name" value="PNAcMuramoyl-5peptid_Trfase"/>
</dbReference>
<dbReference type="InterPro" id="IPR018480">
    <property type="entry name" value="PNAcMuramoyl-5peptid_Trfase_CS"/>
</dbReference>
<dbReference type="NCBIfam" id="TIGR00445">
    <property type="entry name" value="mraY"/>
    <property type="match status" value="1"/>
</dbReference>
<dbReference type="PANTHER" id="PTHR22926">
    <property type="entry name" value="PHOSPHO-N-ACETYLMURAMOYL-PENTAPEPTIDE-TRANSFERASE"/>
    <property type="match status" value="1"/>
</dbReference>
<dbReference type="PANTHER" id="PTHR22926:SF5">
    <property type="entry name" value="PHOSPHO-N-ACETYLMURAMOYL-PENTAPEPTIDE-TRANSFERASE HOMOLOG"/>
    <property type="match status" value="1"/>
</dbReference>
<dbReference type="Pfam" id="PF00953">
    <property type="entry name" value="Glycos_transf_4"/>
    <property type="match status" value="1"/>
</dbReference>
<dbReference type="Pfam" id="PF10555">
    <property type="entry name" value="MraY_sig1"/>
    <property type="match status" value="1"/>
</dbReference>
<dbReference type="PROSITE" id="PS01347">
    <property type="entry name" value="MRAY_1"/>
    <property type="match status" value="1"/>
</dbReference>
<dbReference type="PROSITE" id="PS01348">
    <property type="entry name" value="MRAY_2"/>
    <property type="match status" value="1"/>
</dbReference>
<feature type="chain" id="PRO_1000090651" description="Phospho-N-acetylmuramoyl-pentapeptide-transferase">
    <location>
        <begin position="1"/>
        <end position="371"/>
    </location>
</feature>
<feature type="transmembrane region" description="Helical" evidence="1">
    <location>
        <begin position="25"/>
        <end position="45"/>
    </location>
</feature>
<feature type="transmembrane region" description="Helical" evidence="1">
    <location>
        <begin position="77"/>
        <end position="94"/>
    </location>
</feature>
<feature type="transmembrane region" description="Helical" evidence="1">
    <location>
        <begin position="136"/>
        <end position="156"/>
    </location>
</feature>
<feature type="transmembrane region" description="Helical" evidence="1">
    <location>
        <begin position="172"/>
        <end position="192"/>
    </location>
</feature>
<feature type="transmembrane region" description="Helical" evidence="1">
    <location>
        <begin position="204"/>
        <end position="224"/>
    </location>
</feature>
<feature type="transmembrane region" description="Helical" evidence="1">
    <location>
        <begin position="240"/>
        <end position="260"/>
    </location>
</feature>
<feature type="transmembrane region" description="Helical" evidence="1">
    <location>
        <begin position="269"/>
        <end position="289"/>
    </location>
</feature>
<feature type="transmembrane region" description="Helical" evidence="1">
    <location>
        <begin position="296"/>
        <end position="316"/>
    </location>
</feature>
<feature type="transmembrane region" description="Helical" evidence="1">
    <location>
        <begin position="348"/>
        <end position="368"/>
    </location>
</feature>
<accession>B1ZU32</accession>
<organism>
    <name type="scientific">Opitutus terrae (strain DSM 11246 / JCM 15787 / PB90-1)</name>
    <dbReference type="NCBI Taxonomy" id="452637"/>
    <lineage>
        <taxon>Bacteria</taxon>
        <taxon>Pseudomonadati</taxon>
        <taxon>Verrucomicrobiota</taxon>
        <taxon>Opitutia</taxon>
        <taxon>Opitutales</taxon>
        <taxon>Opitutaceae</taxon>
        <taxon>Opitutus</taxon>
    </lineage>
</organism>
<name>MRAY_OPITP</name>
<proteinExistence type="inferred from homology"/>
<sequence>MLSHLADLQDYFGPLRLLRYITVRTLLAAVTSLTIGFVIAPWLIAKFRELKLGHGYIDDRTGALGATYFDKKNTPTMGGLIIFLSVFTSAALWAAPNIWVFVSLFVYAALTIPGWRDDYLKVVHKNRNGISSWEKIGWQSLATVVALGLLLWHPASAQKIREFWVPFVKYPLIPHMHWAVLLVLIYLWIVGFSNAINLTDGLDGLAIGCTIPVALVFGIMAYVADHVFLSQYLLTSHVPGTGELAVICGALIGGCMAFLWYNCHPAEVFMGDTGSLALGGLIGVMAFMIHQPLTLVIVGGVFVAEMLSVVVQVGVFKITKRRSGVGRRFFLMAPVHHHFQKKGWPETKVVLRFWVLSLGCALAGLATLKLR</sequence>
<comment type="function">
    <text evidence="1">Catalyzes the initial step of the lipid cycle reactions in the biosynthesis of the cell wall peptidoglycan: transfers peptidoglycan precursor phospho-MurNAc-pentapeptide from UDP-MurNAc-pentapeptide onto the lipid carrier undecaprenyl phosphate, yielding undecaprenyl-pyrophosphoryl-MurNAc-pentapeptide, known as lipid I.</text>
</comment>
<comment type="catalytic activity">
    <reaction evidence="1">
        <text>UDP-N-acetyl-alpha-D-muramoyl-L-alanyl-gamma-D-glutamyl-meso-2,6-diaminopimeloyl-D-alanyl-D-alanine + di-trans,octa-cis-undecaprenyl phosphate = di-trans,octa-cis-undecaprenyl diphospho-N-acetyl-alpha-D-muramoyl-L-alanyl-D-glutamyl-meso-2,6-diaminopimeloyl-D-alanyl-D-alanine + UMP</text>
        <dbReference type="Rhea" id="RHEA:28386"/>
        <dbReference type="ChEBI" id="CHEBI:57865"/>
        <dbReference type="ChEBI" id="CHEBI:60392"/>
        <dbReference type="ChEBI" id="CHEBI:61386"/>
        <dbReference type="ChEBI" id="CHEBI:61387"/>
        <dbReference type="EC" id="2.7.8.13"/>
    </reaction>
</comment>
<comment type="cofactor">
    <cofactor evidence="1">
        <name>Mg(2+)</name>
        <dbReference type="ChEBI" id="CHEBI:18420"/>
    </cofactor>
</comment>
<comment type="pathway">
    <text evidence="1">Cell wall biogenesis; peptidoglycan biosynthesis.</text>
</comment>
<comment type="subcellular location">
    <subcellularLocation>
        <location evidence="1">Cell inner membrane</location>
        <topology evidence="1">Multi-pass membrane protein</topology>
    </subcellularLocation>
</comment>
<comment type="similarity">
    <text evidence="1">Belongs to the glycosyltransferase 4 family. MraY subfamily.</text>
</comment>
<protein>
    <recommendedName>
        <fullName evidence="1">Phospho-N-acetylmuramoyl-pentapeptide-transferase</fullName>
        <ecNumber evidence="1">2.7.8.13</ecNumber>
    </recommendedName>
    <alternativeName>
        <fullName evidence="1">UDP-MurNAc-pentapeptide phosphotransferase</fullName>
    </alternativeName>
</protein>
<gene>
    <name evidence="1" type="primary">mraY</name>
    <name type="ordered locus">Oter_2632</name>
</gene>
<keyword id="KW-0131">Cell cycle</keyword>
<keyword id="KW-0132">Cell division</keyword>
<keyword id="KW-0997">Cell inner membrane</keyword>
<keyword id="KW-1003">Cell membrane</keyword>
<keyword id="KW-0133">Cell shape</keyword>
<keyword id="KW-0961">Cell wall biogenesis/degradation</keyword>
<keyword id="KW-0460">Magnesium</keyword>
<keyword id="KW-0472">Membrane</keyword>
<keyword id="KW-0479">Metal-binding</keyword>
<keyword id="KW-0573">Peptidoglycan synthesis</keyword>
<keyword id="KW-1185">Reference proteome</keyword>
<keyword id="KW-0808">Transferase</keyword>
<keyword id="KW-0812">Transmembrane</keyword>
<keyword id="KW-1133">Transmembrane helix</keyword>
<evidence type="ECO:0000255" key="1">
    <source>
        <dbReference type="HAMAP-Rule" id="MF_00038"/>
    </source>
</evidence>
<reference key="1">
    <citation type="journal article" date="2011" name="J. Bacteriol.">
        <title>Genome sequence of the verrucomicrobium Opitutus terrae PB90-1, an abundant inhabitant of rice paddy soil ecosystems.</title>
        <authorList>
            <person name="van Passel M.W."/>
            <person name="Kant R."/>
            <person name="Palva A."/>
            <person name="Copeland A."/>
            <person name="Lucas S."/>
            <person name="Lapidus A."/>
            <person name="Glavina del Rio T."/>
            <person name="Pitluck S."/>
            <person name="Goltsman E."/>
            <person name="Clum A."/>
            <person name="Sun H."/>
            <person name="Schmutz J."/>
            <person name="Larimer F.W."/>
            <person name="Land M.L."/>
            <person name="Hauser L."/>
            <person name="Kyrpides N."/>
            <person name="Mikhailova N."/>
            <person name="Richardson P.P."/>
            <person name="Janssen P.H."/>
            <person name="de Vos W.M."/>
            <person name="Smidt H."/>
        </authorList>
    </citation>
    <scope>NUCLEOTIDE SEQUENCE [LARGE SCALE GENOMIC DNA]</scope>
    <source>
        <strain>DSM 11246 / JCM 15787 / PB90-1</strain>
    </source>
</reference>